<evidence type="ECO:0000255" key="1">
    <source>
        <dbReference type="HAMAP-Rule" id="MF_01039"/>
    </source>
</evidence>
<accession>Q3BR53</accession>
<gene>
    <name evidence="1" type="primary">gpmA</name>
    <name type="ordered locus">XCV3029</name>
</gene>
<protein>
    <recommendedName>
        <fullName evidence="1">2,3-bisphosphoglycerate-dependent phosphoglycerate mutase</fullName>
        <shortName evidence="1">BPG-dependent PGAM</shortName>
        <shortName evidence="1">PGAM</shortName>
        <shortName evidence="1">Phosphoglyceromutase</shortName>
        <shortName evidence="1">dPGM</shortName>
        <ecNumber evidence="1">5.4.2.11</ecNumber>
    </recommendedName>
</protein>
<dbReference type="EC" id="5.4.2.11" evidence="1"/>
<dbReference type="EMBL" id="AM039952">
    <property type="protein sequence ID" value="CAJ24740.1"/>
    <property type="molecule type" value="Genomic_DNA"/>
</dbReference>
<dbReference type="RefSeq" id="WP_008572455.1">
    <property type="nucleotide sequence ID" value="NZ_CP017190.1"/>
</dbReference>
<dbReference type="SMR" id="Q3BR53"/>
<dbReference type="STRING" id="456327.BJD11_07705"/>
<dbReference type="GeneID" id="97511162"/>
<dbReference type="KEGG" id="xcv:XCV3029"/>
<dbReference type="eggNOG" id="COG0588">
    <property type="taxonomic scope" value="Bacteria"/>
</dbReference>
<dbReference type="HOGENOM" id="CLU_033323_1_1_6"/>
<dbReference type="UniPathway" id="UPA00109">
    <property type="reaction ID" value="UER00186"/>
</dbReference>
<dbReference type="Proteomes" id="UP000007069">
    <property type="component" value="Chromosome"/>
</dbReference>
<dbReference type="GO" id="GO:0004619">
    <property type="term" value="F:phosphoglycerate mutase activity"/>
    <property type="evidence" value="ECO:0007669"/>
    <property type="project" value="UniProtKB-EC"/>
</dbReference>
<dbReference type="GO" id="GO:0006094">
    <property type="term" value="P:gluconeogenesis"/>
    <property type="evidence" value="ECO:0007669"/>
    <property type="project" value="UniProtKB-UniRule"/>
</dbReference>
<dbReference type="GO" id="GO:0006096">
    <property type="term" value="P:glycolytic process"/>
    <property type="evidence" value="ECO:0007669"/>
    <property type="project" value="UniProtKB-UniRule"/>
</dbReference>
<dbReference type="CDD" id="cd07067">
    <property type="entry name" value="HP_PGM_like"/>
    <property type="match status" value="1"/>
</dbReference>
<dbReference type="FunFam" id="3.40.50.1240:FF:000003">
    <property type="entry name" value="2,3-bisphosphoglycerate-dependent phosphoglycerate mutase"/>
    <property type="match status" value="1"/>
</dbReference>
<dbReference type="Gene3D" id="3.40.50.1240">
    <property type="entry name" value="Phosphoglycerate mutase-like"/>
    <property type="match status" value="1"/>
</dbReference>
<dbReference type="HAMAP" id="MF_01039">
    <property type="entry name" value="PGAM_GpmA"/>
    <property type="match status" value="1"/>
</dbReference>
<dbReference type="InterPro" id="IPR013078">
    <property type="entry name" value="His_Pase_superF_clade-1"/>
</dbReference>
<dbReference type="InterPro" id="IPR029033">
    <property type="entry name" value="His_PPase_superfam"/>
</dbReference>
<dbReference type="InterPro" id="IPR001345">
    <property type="entry name" value="PG/BPGM_mutase_AS"/>
</dbReference>
<dbReference type="InterPro" id="IPR005952">
    <property type="entry name" value="Phosphogly_mut1"/>
</dbReference>
<dbReference type="NCBIfam" id="TIGR01258">
    <property type="entry name" value="pgm_1"/>
    <property type="match status" value="1"/>
</dbReference>
<dbReference type="NCBIfam" id="NF010713">
    <property type="entry name" value="PRK14115.1"/>
    <property type="match status" value="1"/>
</dbReference>
<dbReference type="PANTHER" id="PTHR11931">
    <property type="entry name" value="PHOSPHOGLYCERATE MUTASE"/>
    <property type="match status" value="1"/>
</dbReference>
<dbReference type="Pfam" id="PF00300">
    <property type="entry name" value="His_Phos_1"/>
    <property type="match status" value="2"/>
</dbReference>
<dbReference type="PIRSF" id="PIRSF000709">
    <property type="entry name" value="6PFK_2-Ptase"/>
    <property type="match status" value="1"/>
</dbReference>
<dbReference type="SMART" id="SM00855">
    <property type="entry name" value="PGAM"/>
    <property type="match status" value="1"/>
</dbReference>
<dbReference type="SUPFAM" id="SSF53254">
    <property type="entry name" value="Phosphoglycerate mutase-like"/>
    <property type="match status" value="1"/>
</dbReference>
<dbReference type="PROSITE" id="PS00175">
    <property type="entry name" value="PG_MUTASE"/>
    <property type="match status" value="1"/>
</dbReference>
<comment type="function">
    <text evidence="1">Catalyzes the interconversion of 2-phosphoglycerate and 3-phosphoglycerate.</text>
</comment>
<comment type="catalytic activity">
    <reaction evidence="1">
        <text>(2R)-2-phosphoglycerate = (2R)-3-phosphoglycerate</text>
        <dbReference type="Rhea" id="RHEA:15901"/>
        <dbReference type="ChEBI" id="CHEBI:58272"/>
        <dbReference type="ChEBI" id="CHEBI:58289"/>
        <dbReference type="EC" id="5.4.2.11"/>
    </reaction>
</comment>
<comment type="pathway">
    <text evidence="1">Carbohydrate degradation; glycolysis; pyruvate from D-glyceraldehyde 3-phosphate: step 3/5.</text>
</comment>
<comment type="subunit">
    <text evidence="1">Homodimer.</text>
</comment>
<comment type="similarity">
    <text evidence="1">Belongs to the phosphoglycerate mutase family. BPG-dependent PGAM subfamily.</text>
</comment>
<organism>
    <name type="scientific">Xanthomonas euvesicatoria pv. vesicatoria (strain 85-10)</name>
    <name type="common">Xanthomonas campestris pv. vesicatoria</name>
    <dbReference type="NCBI Taxonomy" id="316273"/>
    <lineage>
        <taxon>Bacteria</taxon>
        <taxon>Pseudomonadati</taxon>
        <taxon>Pseudomonadota</taxon>
        <taxon>Gammaproteobacteria</taxon>
        <taxon>Lysobacterales</taxon>
        <taxon>Lysobacteraceae</taxon>
        <taxon>Xanthomonas</taxon>
    </lineage>
</organism>
<feature type="chain" id="PRO_0000229149" description="2,3-bisphosphoglycerate-dependent phosphoglycerate mutase">
    <location>
        <begin position="1"/>
        <end position="249"/>
    </location>
</feature>
<feature type="active site" description="Tele-phosphohistidine intermediate" evidence="1">
    <location>
        <position position="10"/>
    </location>
</feature>
<feature type="active site" description="Proton donor/acceptor" evidence="1">
    <location>
        <position position="88"/>
    </location>
</feature>
<feature type="binding site" evidence="1">
    <location>
        <begin position="9"/>
        <end position="16"/>
    </location>
    <ligand>
        <name>substrate</name>
    </ligand>
</feature>
<feature type="binding site" evidence="1">
    <location>
        <begin position="22"/>
        <end position="23"/>
    </location>
    <ligand>
        <name>substrate</name>
    </ligand>
</feature>
<feature type="binding site" evidence="1">
    <location>
        <position position="61"/>
    </location>
    <ligand>
        <name>substrate</name>
    </ligand>
</feature>
<feature type="binding site" evidence="1">
    <location>
        <begin position="88"/>
        <end position="91"/>
    </location>
    <ligand>
        <name>substrate</name>
    </ligand>
</feature>
<feature type="binding site" evidence="1">
    <location>
        <position position="99"/>
    </location>
    <ligand>
        <name>substrate</name>
    </ligand>
</feature>
<feature type="binding site" evidence="1">
    <location>
        <begin position="115"/>
        <end position="116"/>
    </location>
    <ligand>
        <name>substrate</name>
    </ligand>
</feature>
<feature type="binding site" evidence="1">
    <location>
        <begin position="184"/>
        <end position="185"/>
    </location>
    <ligand>
        <name>substrate</name>
    </ligand>
</feature>
<feature type="site" description="Transition state stabilizer" evidence="1">
    <location>
        <position position="183"/>
    </location>
</feature>
<keyword id="KW-0312">Gluconeogenesis</keyword>
<keyword id="KW-0324">Glycolysis</keyword>
<keyword id="KW-0413">Isomerase</keyword>
<sequence length="249" mass="27985">MTRKLVLLRHGQSQWNLDNRFTGWVDVELTDQGRQEAVAAGKLMKDEGLQFDVAHTSVLKRAIHTLQGALKELDQDWLPVSKSWRLNERHYGGLQGLDKAETAAKHGEEQVKIWRRSYDIPPPAMDVNDPGHPCHDRRYATLDRNALPGTESLATTLVRVLPYWHDAIAPQLKAGQTVLVTAHGNSLRALYKYLNDVSNEQILELNIPTGIPLLFELDDNLQVRSFRYLGDPEAAKRAAEAVANQGKAK</sequence>
<reference key="1">
    <citation type="journal article" date="2005" name="J. Bacteriol.">
        <title>Insights into genome plasticity and pathogenicity of the plant pathogenic Bacterium Xanthomonas campestris pv. vesicatoria revealed by the complete genome sequence.</title>
        <authorList>
            <person name="Thieme F."/>
            <person name="Koebnik R."/>
            <person name="Bekel T."/>
            <person name="Berger C."/>
            <person name="Boch J."/>
            <person name="Buettner D."/>
            <person name="Caldana C."/>
            <person name="Gaigalat L."/>
            <person name="Goesmann A."/>
            <person name="Kay S."/>
            <person name="Kirchner O."/>
            <person name="Lanz C."/>
            <person name="Linke B."/>
            <person name="McHardy A.C."/>
            <person name="Meyer F."/>
            <person name="Mittenhuber G."/>
            <person name="Nies D.H."/>
            <person name="Niesbach-Kloesgen U."/>
            <person name="Patschkowski T."/>
            <person name="Rueckert C."/>
            <person name="Rupp O."/>
            <person name="Schneiker S."/>
            <person name="Schuster S.C."/>
            <person name="Vorhoelter F.J."/>
            <person name="Weber E."/>
            <person name="Puehler A."/>
            <person name="Bonas U."/>
            <person name="Bartels D."/>
            <person name="Kaiser O."/>
        </authorList>
    </citation>
    <scope>NUCLEOTIDE SEQUENCE [LARGE SCALE GENOMIC DNA]</scope>
    <source>
        <strain>85-10</strain>
    </source>
</reference>
<name>GPMA_XANE5</name>
<proteinExistence type="inferred from homology"/>